<protein>
    <recommendedName>
        <fullName evidence="1">DNA topoisomerase 1</fullName>
        <ecNumber evidence="1">5.6.2.1</ecNumber>
    </recommendedName>
    <alternativeName>
        <fullName evidence="1">DNA topoisomerase I</fullName>
    </alternativeName>
    <alternativeName>
        <fullName>Omega-protein</fullName>
    </alternativeName>
    <alternativeName>
        <fullName>Relaxing enzyme</fullName>
    </alternativeName>
    <alternativeName>
        <fullName>Swivelase</fullName>
    </alternativeName>
    <alternativeName>
        <fullName>Untwisting enzyme</fullName>
    </alternativeName>
</protein>
<evidence type="ECO:0000255" key="1">
    <source>
        <dbReference type="HAMAP-Rule" id="MF_00952"/>
    </source>
</evidence>
<evidence type="ECO:0000255" key="2">
    <source>
        <dbReference type="PROSITE-ProRule" id="PRU01383"/>
    </source>
</evidence>
<evidence type="ECO:0000256" key="3">
    <source>
        <dbReference type="SAM" id="MobiDB-lite"/>
    </source>
</evidence>
<proteinExistence type="inferred from homology"/>
<dbReference type="EC" id="5.6.2.1" evidence="1"/>
<dbReference type="EMBL" id="BX571856">
    <property type="protein sequence ID" value="CAG40228.1"/>
    <property type="molecule type" value="Genomic_DNA"/>
</dbReference>
<dbReference type="SMR" id="Q6GHI5"/>
<dbReference type="KEGG" id="sar:SAR1226"/>
<dbReference type="HOGENOM" id="CLU_002929_4_3_9"/>
<dbReference type="Proteomes" id="UP000000596">
    <property type="component" value="Chromosome"/>
</dbReference>
<dbReference type="GO" id="GO:0005694">
    <property type="term" value="C:chromosome"/>
    <property type="evidence" value="ECO:0007669"/>
    <property type="project" value="InterPro"/>
</dbReference>
<dbReference type="GO" id="GO:0003677">
    <property type="term" value="F:DNA binding"/>
    <property type="evidence" value="ECO:0007669"/>
    <property type="project" value="UniProtKB-KW"/>
</dbReference>
<dbReference type="GO" id="GO:0003917">
    <property type="term" value="F:DNA topoisomerase type I (single strand cut, ATP-independent) activity"/>
    <property type="evidence" value="ECO:0007669"/>
    <property type="project" value="UniProtKB-UniRule"/>
</dbReference>
<dbReference type="GO" id="GO:0008270">
    <property type="term" value="F:zinc ion binding"/>
    <property type="evidence" value="ECO:0007669"/>
    <property type="project" value="UniProtKB-KW"/>
</dbReference>
<dbReference type="GO" id="GO:0006265">
    <property type="term" value="P:DNA topological change"/>
    <property type="evidence" value="ECO:0007669"/>
    <property type="project" value="UniProtKB-UniRule"/>
</dbReference>
<dbReference type="CDD" id="cd00186">
    <property type="entry name" value="TOP1Ac"/>
    <property type="match status" value="1"/>
</dbReference>
<dbReference type="CDD" id="cd03363">
    <property type="entry name" value="TOPRIM_TopoIA_TopoI"/>
    <property type="match status" value="1"/>
</dbReference>
<dbReference type="Gene3D" id="3.40.50.140">
    <property type="match status" value="1"/>
</dbReference>
<dbReference type="Gene3D" id="3.30.65.10">
    <property type="entry name" value="Bacterial Topoisomerase I, domain 1"/>
    <property type="match status" value="2"/>
</dbReference>
<dbReference type="Gene3D" id="1.10.460.10">
    <property type="entry name" value="Topoisomerase I, domain 2"/>
    <property type="match status" value="1"/>
</dbReference>
<dbReference type="Gene3D" id="2.70.20.10">
    <property type="entry name" value="Topoisomerase I, domain 3"/>
    <property type="match status" value="1"/>
</dbReference>
<dbReference type="Gene3D" id="1.10.290.10">
    <property type="entry name" value="Topoisomerase I, domain 4"/>
    <property type="match status" value="1"/>
</dbReference>
<dbReference type="HAMAP" id="MF_00952">
    <property type="entry name" value="Topoisom_1_prok"/>
    <property type="match status" value="1"/>
</dbReference>
<dbReference type="InterPro" id="IPR000380">
    <property type="entry name" value="Topo_IA"/>
</dbReference>
<dbReference type="InterPro" id="IPR003601">
    <property type="entry name" value="Topo_IA_2"/>
</dbReference>
<dbReference type="InterPro" id="IPR023406">
    <property type="entry name" value="Topo_IA_AS"/>
</dbReference>
<dbReference type="InterPro" id="IPR013497">
    <property type="entry name" value="Topo_IA_cen"/>
</dbReference>
<dbReference type="InterPro" id="IPR013824">
    <property type="entry name" value="Topo_IA_cen_sub1"/>
</dbReference>
<dbReference type="InterPro" id="IPR013825">
    <property type="entry name" value="Topo_IA_cen_sub2"/>
</dbReference>
<dbReference type="InterPro" id="IPR013826">
    <property type="entry name" value="Topo_IA_cen_sub3"/>
</dbReference>
<dbReference type="InterPro" id="IPR023405">
    <property type="entry name" value="Topo_IA_core_domain"/>
</dbReference>
<dbReference type="InterPro" id="IPR003602">
    <property type="entry name" value="Topo_IA_DNA-bd_dom"/>
</dbReference>
<dbReference type="InterPro" id="IPR013498">
    <property type="entry name" value="Topo_IA_Znf"/>
</dbReference>
<dbReference type="InterPro" id="IPR005733">
    <property type="entry name" value="TopoI_bac-type"/>
</dbReference>
<dbReference type="InterPro" id="IPR028612">
    <property type="entry name" value="Topoisom_1_IA"/>
</dbReference>
<dbReference type="InterPro" id="IPR006171">
    <property type="entry name" value="TOPRIM_dom"/>
</dbReference>
<dbReference type="InterPro" id="IPR034149">
    <property type="entry name" value="TOPRIM_TopoI"/>
</dbReference>
<dbReference type="NCBIfam" id="TIGR01051">
    <property type="entry name" value="topA_bact"/>
    <property type="match status" value="1"/>
</dbReference>
<dbReference type="PANTHER" id="PTHR42785:SF1">
    <property type="entry name" value="DNA TOPOISOMERASE"/>
    <property type="match status" value="1"/>
</dbReference>
<dbReference type="PANTHER" id="PTHR42785">
    <property type="entry name" value="DNA TOPOISOMERASE, TYPE IA, CORE"/>
    <property type="match status" value="1"/>
</dbReference>
<dbReference type="Pfam" id="PF01131">
    <property type="entry name" value="Topoisom_bac"/>
    <property type="match status" value="1"/>
</dbReference>
<dbReference type="Pfam" id="PF01751">
    <property type="entry name" value="Toprim"/>
    <property type="match status" value="1"/>
</dbReference>
<dbReference type="Pfam" id="PF01396">
    <property type="entry name" value="Zn_ribbon_Top1"/>
    <property type="match status" value="3"/>
</dbReference>
<dbReference type="PRINTS" id="PR00417">
    <property type="entry name" value="PRTPISMRASEI"/>
</dbReference>
<dbReference type="SMART" id="SM00437">
    <property type="entry name" value="TOP1Ac"/>
    <property type="match status" value="1"/>
</dbReference>
<dbReference type="SMART" id="SM00436">
    <property type="entry name" value="TOP1Bc"/>
    <property type="match status" value="1"/>
</dbReference>
<dbReference type="SMART" id="SM00493">
    <property type="entry name" value="TOPRIM"/>
    <property type="match status" value="1"/>
</dbReference>
<dbReference type="SUPFAM" id="SSF56712">
    <property type="entry name" value="Prokaryotic type I DNA topoisomerase"/>
    <property type="match status" value="1"/>
</dbReference>
<dbReference type="PROSITE" id="PS00396">
    <property type="entry name" value="TOPO_IA_1"/>
    <property type="match status" value="1"/>
</dbReference>
<dbReference type="PROSITE" id="PS52039">
    <property type="entry name" value="TOPO_IA_2"/>
    <property type="match status" value="1"/>
</dbReference>
<dbReference type="PROSITE" id="PS50880">
    <property type="entry name" value="TOPRIM"/>
    <property type="match status" value="1"/>
</dbReference>
<name>TOP1_STAAR</name>
<accession>Q6GHI5</accession>
<keyword id="KW-0238">DNA-binding</keyword>
<keyword id="KW-0413">Isomerase</keyword>
<keyword id="KW-0460">Magnesium</keyword>
<keyword id="KW-0479">Metal-binding</keyword>
<keyword id="KW-0677">Repeat</keyword>
<keyword id="KW-0799">Topoisomerase</keyword>
<keyword id="KW-0862">Zinc</keyword>
<keyword id="KW-0863">Zinc-finger</keyword>
<organism>
    <name type="scientific">Staphylococcus aureus (strain MRSA252)</name>
    <dbReference type="NCBI Taxonomy" id="282458"/>
    <lineage>
        <taxon>Bacteria</taxon>
        <taxon>Bacillati</taxon>
        <taxon>Bacillota</taxon>
        <taxon>Bacilli</taxon>
        <taxon>Bacillales</taxon>
        <taxon>Staphylococcaceae</taxon>
        <taxon>Staphylococcus</taxon>
    </lineage>
</organism>
<sequence>MADNLVIVESPAKAKTIEKYLGKKYKVIASMGHVRDLPRSQMGVDTEDNYEPKYITIRGKGPVVKELKKHAKKAKNVFLASDPDREGEAIAWHLSKILELEDSKENRVVFNEITKDAVKESFKNPREIEMNLVDAQQARRILDRLVGYNISPVLWKKVKKGLSAGRVQSVALRLVIDRENEIRNFKPEEYWTIEGEFRYKKSKFNAKFLHYKNKPFKLKTKKDVEKITAALDGDQFEITNVTKKEKTRNPANPFTTSTLQQEAARKLNFKARKTMMVAQQLYEGIDLKKQGTIGLITYMRTDSTRISDTAKAEAKQYITDKYGESYTSKRKASGKQGDQDAHEAIRPSSTMRTPDDMKSFLTKDQYRLYKLIWERFVASQMAPAILDTVSLDITQGDIKFRANGQTIKFKGFMTLYVETKDDSDSEKENKLPKLEQGDKVTATQIEPAQHYTQPPPRYTEARLVKTLEELKIGRPSTYAPTIDTIQKRNYVKLESKRFVPTELGEIVHEQVKEYFPEIIDVEFTVNMETLLDKIAEGDITWRKVIDGFFSSFKQDVERAEEEMEKIEIKDEPAGEDCEVCGSPMVIKMGRYGKFMACSNFPDCRNTKAIVKSIGVKCPKCNDGDVVERKSKKNRVFYGCSKYPECDFISWDKPIGRDCPKCNQYLVENKKGKTTQVICSNCDYKEAAQK</sequence>
<reference key="1">
    <citation type="journal article" date="2004" name="Proc. Natl. Acad. Sci. U.S.A.">
        <title>Complete genomes of two clinical Staphylococcus aureus strains: evidence for the rapid evolution of virulence and drug resistance.</title>
        <authorList>
            <person name="Holden M.T.G."/>
            <person name="Feil E.J."/>
            <person name="Lindsay J.A."/>
            <person name="Peacock S.J."/>
            <person name="Day N.P.J."/>
            <person name="Enright M.C."/>
            <person name="Foster T.J."/>
            <person name="Moore C.E."/>
            <person name="Hurst L."/>
            <person name="Atkin R."/>
            <person name="Barron A."/>
            <person name="Bason N."/>
            <person name="Bentley S.D."/>
            <person name="Chillingworth C."/>
            <person name="Chillingworth T."/>
            <person name="Churcher C."/>
            <person name="Clark L."/>
            <person name="Corton C."/>
            <person name="Cronin A."/>
            <person name="Doggett J."/>
            <person name="Dowd L."/>
            <person name="Feltwell T."/>
            <person name="Hance Z."/>
            <person name="Harris B."/>
            <person name="Hauser H."/>
            <person name="Holroyd S."/>
            <person name="Jagels K."/>
            <person name="James K.D."/>
            <person name="Lennard N."/>
            <person name="Line A."/>
            <person name="Mayes R."/>
            <person name="Moule S."/>
            <person name="Mungall K."/>
            <person name="Ormond D."/>
            <person name="Quail M.A."/>
            <person name="Rabbinowitsch E."/>
            <person name="Rutherford K.M."/>
            <person name="Sanders M."/>
            <person name="Sharp S."/>
            <person name="Simmonds M."/>
            <person name="Stevens K."/>
            <person name="Whitehead S."/>
            <person name="Barrell B.G."/>
            <person name="Spratt B.G."/>
            <person name="Parkhill J."/>
        </authorList>
    </citation>
    <scope>NUCLEOTIDE SEQUENCE [LARGE SCALE GENOMIC DNA]</scope>
    <source>
        <strain>MRSA252</strain>
    </source>
</reference>
<gene>
    <name evidence="1" type="primary">topA</name>
    <name type="ordered locus">SAR1226</name>
</gene>
<comment type="function">
    <text evidence="1">Releases the supercoiling and torsional tension of DNA, which is introduced during the DNA replication and transcription, by transiently cleaving and rejoining one strand of the DNA duplex. Introduces a single-strand break via transesterification at a target site in duplex DNA. The scissile phosphodiester is attacked by the catalytic tyrosine of the enzyme, resulting in the formation of a DNA-(5'-phosphotyrosyl)-enzyme intermediate and the expulsion of a 3'-OH DNA strand. The free DNA strand then undergoes passage around the unbroken strand, thus removing DNA supercoils. Finally, in the religation step, the DNA 3'-OH attacks the covalent intermediate to expel the active-site tyrosine and restore the DNA phosphodiester backbone.</text>
</comment>
<comment type="catalytic activity">
    <reaction evidence="1">
        <text>ATP-independent breakage of single-stranded DNA, followed by passage and rejoining.</text>
        <dbReference type="EC" id="5.6.2.1"/>
    </reaction>
</comment>
<comment type="cofactor">
    <cofactor evidence="1">
        <name>Mg(2+)</name>
        <dbReference type="ChEBI" id="CHEBI:18420"/>
    </cofactor>
</comment>
<comment type="subunit">
    <text evidence="1">Monomer.</text>
</comment>
<comment type="similarity">
    <text evidence="1">Belongs to the type IA topoisomerase family.</text>
</comment>
<feature type="chain" id="PRO_0000285937" description="DNA topoisomerase 1">
    <location>
        <begin position="1"/>
        <end position="689"/>
    </location>
</feature>
<feature type="domain" description="Toprim" evidence="1">
    <location>
        <begin position="3"/>
        <end position="113"/>
    </location>
</feature>
<feature type="domain" description="Topo IA-type catalytic" evidence="2">
    <location>
        <begin position="129"/>
        <end position="557"/>
    </location>
</feature>
<feature type="zinc finger region" description="C4-type 1">
    <location>
        <begin position="577"/>
        <end position="603"/>
    </location>
</feature>
<feature type="zinc finger region" description="C4-type 2">
    <location>
        <begin position="617"/>
        <end position="645"/>
    </location>
</feature>
<feature type="zinc finger region" description="C4-type 3">
    <location>
        <begin position="658"/>
        <end position="681"/>
    </location>
</feature>
<feature type="region of interest" description="Interaction with DNA" evidence="1">
    <location>
        <begin position="163"/>
        <end position="168"/>
    </location>
</feature>
<feature type="region of interest" description="Disordered" evidence="3">
    <location>
        <begin position="328"/>
        <end position="357"/>
    </location>
</feature>
<feature type="active site" description="O-(5'-phospho-DNA)-tyrosine intermediate" evidence="2">
    <location>
        <position position="298"/>
    </location>
</feature>
<feature type="binding site" evidence="1">
    <location>
        <position position="9"/>
    </location>
    <ligand>
        <name>Mg(2+)</name>
        <dbReference type="ChEBI" id="CHEBI:18420"/>
        <note>catalytic</note>
    </ligand>
</feature>
<feature type="binding site" evidence="1">
    <location>
        <position position="82"/>
    </location>
    <ligand>
        <name>Mg(2+)</name>
        <dbReference type="ChEBI" id="CHEBI:18420"/>
        <note>catalytic</note>
    </ligand>
</feature>
<feature type="site" description="Interaction with DNA" evidence="1">
    <location>
        <position position="33"/>
    </location>
</feature>
<feature type="site" description="Interaction with DNA" evidence="1">
    <location>
        <position position="139"/>
    </location>
</feature>
<feature type="site" description="Interaction with DNA" evidence="1">
    <location>
        <position position="140"/>
    </location>
</feature>
<feature type="site" description="Interaction with DNA" evidence="1">
    <location>
        <position position="143"/>
    </location>
</feature>
<feature type="site" description="Interaction with DNA" evidence="1">
    <location>
        <position position="148"/>
    </location>
</feature>
<feature type="site" description="Interaction with DNA" evidence="1">
    <location>
        <position position="155"/>
    </location>
</feature>
<feature type="site" description="Interaction with DNA" evidence="1">
    <location>
        <position position="300"/>
    </location>
</feature>
<feature type="site" description="Interaction with DNA" evidence="1">
    <location>
        <position position="488"/>
    </location>
</feature>